<feature type="chain" id="PRO_0000399645" description="Respiratory supercomplex factor 1, mitochondrial">
    <location>
        <begin position="1"/>
        <end position="179"/>
    </location>
</feature>
<feature type="transmembrane region" description="Helical" evidence="3">
    <location>
        <begin position="34"/>
        <end position="50"/>
    </location>
</feature>
<feature type="transmembrane region" description="Helical" evidence="3">
    <location>
        <begin position="70"/>
        <end position="87"/>
    </location>
</feature>
<feature type="domain" description="HIG1" evidence="3">
    <location>
        <begin position="7"/>
        <end position="98"/>
    </location>
</feature>
<feature type="region of interest" description="Disordered" evidence="4">
    <location>
        <begin position="136"/>
        <end position="162"/>
    </location>
</feature>
<feature type="coiled-coil region" evidence="2">
    <location>
        <begin position="98"/>
        <end position="118"/>
    </location>
</feature>
<feature type="compositionally biased region" description="Basic and acidic residues" evidence="4">
    <location>
        <begin position="136"/>
        <end position="153"/>
    </location>
</feature>
<keyword id="KW-0175">Coiled coil</keyword>
<keyword id="KW-0472">Membrane</keyword>
<keyword id="KW-0496">Mitochondrion</keyword>
<keyword id="KW-1185">Reference proteome</keyword>
<keyword id="KW-0812">Transmembrane</keyword>
<keyword id="KW-1133">Transmembrane helix</keyword>
<comment type="function">
    <text evidence="1">Cytochrome c oxidase subunit which plays a role in assembly of respiratory supercomplexes.</text>
</comment>
<comment type="subunit">
    <text evidence="1">Associates with the respiratory chain complex III/complex IV supercomplex.</text>
</comment>
<comment type="subcellular location">
    <subcellularLocation>
        <location evidence="3">Mitochondrion membrane</location>
        <topology evidence="3">Multi-pass membrane protein</topology>
    </subcellularLocation>
</comment>
<comment type="similarity">
    <text evidence="5">Belongs to the RCF1 family.</text>
</comment>
<name>RCF1_PENRW</name>
<accession>B6H465</accession>
<organism>
    <name type="scientific">Penicillium rubens (strain ATCC 28089 / DSM 1075 / NRRL 1951 / Wisconsin 54-1255)</name>
    <name type="common">Penicillium chrysogenum</name>
    <dbReference type="NCBI Taxonomy" id="500485"/>
    <lineage>
        <taxon>Eukaryota</taxon>
        <taxon>Fungi</taxon>
        <taxon>Dikarya</taxon>
        <taxon>Ascomycota</taxon>
        <taxon>Pezizomycotina</taxon>
        <taxon>Eurotiomycetes</taxon>
        <taxon>Eurotiomycetidae</taxon>
        <taxon>Eurotiales</taxon>
        <taxon>Aspergillaceae</taxon>
        <taxon>Penicillium</taxon>
        <taxon>Penicillium chrysogenum species complex</taxon>
    </lineage>
</organism>
<proteinExistence type="inferred from homology"/>
<protein>
    <recommendedName>
        <fullName>Respiratory supercomplex factor 1, mitochondrial</fullName>
    </recommendedName>
</protein>
<reference key="1">
    <citation type="journal article" date="2008" name="Nat. Biotechnol.">
        <title>Genome sequencing and analysis of the filamentous fungus Penicillium chrysogenum.</title>
        <authorList>
            <person name="van den Berg M.A."/>
            <person name="Albang R."/>
            <person name="Albermann K."/>
            <person name="Badger J.H."/>
            <person name="Daran J.-M."/>
            <person name="Driessen A.J.M."/>
            <person name="Garcia-Estrada C."/>
            <person name="Fedorova N.D."/>
            <person name="Harris D.M."/>
            <person name="Heijne W.H.M."/>
            <person name="Joardar V.S."/>
            <person name="Kiel J.A.K.W."/>
            <person name="Kovalchuk A."/>
            <person name="Martin J.F."/>
            <person name="Nierman W.C."/>
            <person name="Nijland J.G."/>
            <person name="Pronk J.T."/>
            <person name="Roubos J.A."/>
            <person name="van der Klei I.J."/>
            <person name="van Peij N.N.M.E."/>
            <person name="Veenhuis M."/>
            <person name="von Doehren H."/>
            <person name="Wagner C."/>
            <person name="Wortman J.R."/>
            <person name="Bovenberg R.A.L."/>
        </authorList>
    </citation>
    <scope>NUCLEOTIDE SEQUENCE [LARGE SCALE GENOMIC DNA]</scope>
    <source>
        <strain>ATCC 28089 / DSM 1075 / NRRL 1951 / Wisconsin 54-1255</strain>
    </source>
</reference>
<gene>
    <name type="primary">rcf1</name>
    <name type="synonym">aim31</name>
    <name type="ORF">Pc13g07740</name>
</gene>
<dbReference type="EMBL" id="AM920428">
    <property type="protein sequence ID" value="CAP91843.1"/>
    <property type="molecule type" value="Genomic_DNA"/>
</dbReference>
<dbReference type="RefSeq" id="XP_002559203.1">
    <property type="nucleotide sequence ID" value="XM_002559157.1"/>
</dbReference>
<dbReference type="STRING" id="500485.B6H465"/>
<dbReference type="GeneID" id="8309935"/>
<dbReference type="KEGG" id="pcs:N7525_003395"/>
<dbReference type="VEuPathDB" id="FungiDB:PCH_Pc13g07740"/>
<dbReference type="eggNOG" id="KOG4431">
    <property type="taxonomic scope" value="Eukaryota"/>
</dbReference>
<dbReference type="HOGENOM" id="CLU_087356_0_2_1"/>
<dbReference type="OMA" id="QRWIREL"/>
<dbReference type="OrthoDB" id="6604018at2759"/>
<dbReference type="BioCyc" id="PCHR:PC13G07740-MONOMER"/>
<dbReference type="Proteomes" id="UP000000724">
    <property type="component" value="Contig Pc00c13"/>
</dbReference>
<dbReference type="GO" id="GO:0031966">
    <property type="term" value="C:mitochondrial membrane"/>
    <property type="evidence" value="ECO:0007669"/>
    <property type="project" value="UniProtKB-SubCell"/>
</dbReference>
<dbReference type="GO" id="GO:0097250">
    <property type="term" value="P:mitochondrial respirasome assembly"/>
    <property type="evidence" value="ECO:0007669"/>
    <property type="project" value="TreeGrafter"/>
</dbReference>
<dbReference type="Gene3D" id="6.10.140.1320">
    <property type="match status" value="1"/>
</dbReference>
<dbReference type="InterPro" id="IPR007667">
    <property type="entry name" value="Hypoxia_induced_domain"/>
</dbReference>
<dbReference type="InterPro" id="IPR050355">
    <property type="entry name" value="RCF1"/>
</dbReference>
<dbReference type="PANTHER" id="PTHR12297:SF3">
    <property type="entry name" value="HIG1 DOMAIN FAMILY MEMBER 1A"/>
    <property type="match status" value="1"/>
</dbReference>
<dbReference type="PANTHER" id="PTHR12297">
    <property type="entry name" value="HYPOXIA-INDUCBILE GENE 1 HIG1 -RELATED"/>
    <property type="match status" value="1"/>
</dbReference>
<dbReference type="Pfam" id="PF04588">
    <property type="entry name" value="HIG_1_N"/>
    <property type="match status" value="1"/>
</dbReference>
<dbReference type="PROSITE" id="PS51503">
    <property type="entry name" value="HIG1"/>
    <property type="match status" value="1"/>
</dbReference>
<evidence type="ECO:0000250" key="1"/>
<evidence type="ECO:0000255" key="2"/>
<evidence type="ECO:0000255" key="3">
    <source>
        <dbReference type="PROSITE-ProRule" id="PRU00836"/>
    </source>
</evidence>
<evidence type="ECO:0000256" key="4">
    <source>
        <dbReference type="SAM" id="MobiDB-lite"/>
    </source>
</evidence>
<evidence type="ECO:0000305" key="5"/>
<sequence>MSREPVPSSFDEGNPQFTEETGMQKFTRRLKEEPLVPLGCAATCYALYRAYRSMKSGDSVEMNRMFRARIYAQAFTLVALVAGGMYFKTERQQRREFDQAVELRKKQEKRDAWLRELEIRDKEDREWRERHAAIEAAAKEAGNKAAPRKEPEAARSSIEPADEKSIGVMDAVRALISRN</sequence>